<gene>
    <name type="primary">L</name>
</gene>
<organismHost>
    <name type="scientific">Homo sapiens</name>
    <name type="common">Human</name>
    <dbReference type="NCBI Taxonomy" id="9606"/>
</organismHost>
<reference key="1">
    <citation type="journal article" date="1992" name="Virology">
        <title>Molecular cloning and sequence analysis of the mumps virus gene encoding the L protein and the trailer sequence.</title>
        <authorList>
            <person name="Okazaki K."/>
            <person name="Tanabayashi K."/>
            <person name="Takeuchi K."/>
            <person name="Hishiyama M."/>
            <person name="Okazaki K."/>
            <person name="Yamada A."/>
        </authorList>
    </citation>
    <scope>NUCLEOTIDE SEQUENCE [GENOMIC RNA]</scope>
</reference>
<reference key="2">
    <citation type="journal article" date="2019" name="PLoS Pathog.">
        <title>The R2TP complex regulates paramyxovirus RNA synthesis.</title>
        <authorList>
            <person name="Katoh H."/>
            <person name="Sekizuka T."/>
            <person name="Nakatsu Y."/>
            <person name="Nakagawa R."/>
            <person name="Nao N."/>
            <person name="Sakata M."/>
            <person name="Kato F."/>
            <person name="Kuroda M."/>
            <person name="Kidokoro M."/>
            <person name="Takeda M."/>
        </authorList>
    </citation>
    <scope>INTERACTION WITH THE HOST RUVBL1</scope>
    <scope>INTERACTION WITH THE HOST RUVBL2</scope>
</reference>
<accession>P30929</accession>
<accession>Q783V6</accession>
<proteinExistence type="evidence at protein level"/>
<comment type="function">
    <text evidence="2">RNA-directed RNA polymerase that catalyzes the transcription of viral mRNAs, their capping and polyadenylation. The template is composed of the viral RNA tightly encapsidated by the nucleoprotein (N). The viral polymerase binds to the genomic RNA at the 3' leader promoter, and transcribes subsequently all viral mRNAs with a decreasing efficiency. The first gene is the most transcribed, and the last the least transcribed. The viral phosphoprotein acts as a processivity factor. Capping is concomitant with initiation of mRNA transcription. Indeed, a GDP polyribonucleotidyl transferase (PRNTase) adds the cap structure when the nascent RNA chain length has reached few nucleotides. Ribose 2'-O methylation of viral mRNA cap precedes and facilitates subsequent guanine-N-7 methylation, both activities being carried by the viral polymerase. Polyadenylation of mRNAs occur by a stuttering mechanism at a slipery stop site present at the end viral genes. After finishing transcription of a mRNA, the polymerase can resume transcription of the downstream gene.</text>
</comment>
<comment type="function">
    <text evidence="2">RNA-directed RNA polymerase that catalyzes the replication of viral genomic RNA. The template is composed of the viral RNA tightly encapsidated by the nucleoprotein (N). The replicase mode is dependent on intracellular N protein concentration. In this mode, the polymerase replicates the whole viral genome without recognizing transcriptional signals, and the replicated genome is not caped or polyadenylated.</text>
</comment>
<comment type="catalytic activity">
    <reaction evidence="5">
        <text>RNA(n) + a ribonucleoside 5'-triphosphate = RNA(n+1) + diphosphate</text>
        <dbReference type="Rhea" id="RHEA:21248"/>
        <dbReference type="Rhea" id="RHEA-COMP:14527"/>
        <dbReference type="Rhea" id="RHEA-COMP:17342"/>
        <dbReference type="ChEBI" id="CHEBI:33019"/>
        <dbReference type="ChEBI" id="CHEBI:61557"/>
        <dbReference type="ChEBI" id="CHEBI:140395"/>
        <dbReference type="EC" id="2.7.7.48"/>
    </reaction>
</comment>
<comment type="catalytic activity">
    <reaction evidence="2">
        <text>a 5'-end (5'-triphosphoguanosine)-adenylyl-adenylyl-cytidylyl-adenosine in mRNA + 2 S-adenosyl-L-methionine = a 5'-end (N(7)-methyl 5'-triphosphoguanosine)-(2'-O-methyladenylyl)-adenylyl-cytidylyl-adenosine in mRNA + 2 S-adenosyl-L-homocysteine + H(+)</text>
        <dbReference type="Rhea" id="RHEA:65376"/>
        <dbReference type="Rhea" id="RHEA-COMP:16797"/>
        <dbReference type="Rhea" id="RHEA-COMP:16798"/>
        <dbReference type="ChEBI" id="CHEBI:15378"/>
        <dbReference type="ChEBI" id="CHEBI:57856"/>
        <dbReference type="ChEBI" id="CHEBI:59789"/>
        <dbReference type="ChEBI" id="CHEBI:156483"/>
        <dbReference type="ChEBI" id="CHEBI:156484"/>
        <dbReference type="EC" id="2.1.1.375"/>
    </reaction>
</comment>
<comment type="catalytic activity">
    <reaction evidence="2">
        <text>a 5'-end (5'-triphosphoguanosine)-adenylyl-adenylyl-cytidylyl-adenosine in mRNA + S-adenosyl-L-methionine = a 5'-end (5'-triphosphoguanosine)-(2'-O-methyladenylyl)-adenylyl-cytidylyl-adenosine in mRNA + S-adenosyl-L-homocysteine + H(+)</text>
        <dbReference type="Rhea" id="RHEA:65380"/>
        <dbReference type="Rhea" id="RHEA-COMP:16797"/>
        <dbReference type="Rhea" id="RHEA-COMP:16801"/>
        <dbReference type="ChEBI" id="CHEBI:15378"/>
        <dbReference type="ChEBI" id="CHEBI:57856"/>
        <dbReference type="ChEBI" id="CHEBI:59789"/>
        <dbReference type="ChEBI" id="CHEBI:156482"/>
        <dbReference type="ChEBI" id="CHEBI:156484"/>
    </reaction>
</comment>
<comment type="catalytic activity">
    <reaction evidence="3">
        <text>a 5'-end triphospho-adenylyl-adenylyl-cytidylyl-adenosine in mRNA + GDP + H(+) = a 5'-end (5'-triphosphoguanosine)-adenylyl-adenylyl-cytidylyl-adenosine in mRNA + diphosphate</text>
        <dbReference type="Rhea" id="RHEA:65436"/>
        <dbReference type="Rhea" id="RHEA-COMP:16797"/>
        <dbReference type="Rhea" id="RHEA-COMP:16799"/>
        <dbReference type="ChEBI" id="CHEBI:15378"/>
        <dbReference type="ChEBI" id="CHEBI:33019"/>
        <dbReference type="ChEBI" id="CHEBI:58189"/>
        <dbReference type="ChEBI" id="CHEBI:156484"/>
        <dbReference type="ChEBI" id="CHEBI:156503"/>
        <dbReference type="EC" id="2.7.7.88"/>
    </reaction>
</comment>
<comment type="catalytic activity">
    <reaction evidence="2">
        <text>a 5'-end (5'-triphosphoguanosine)-(2'-O-methyladenylyl)-adenylyl-cytidylyl-adenosine in mRNA + S-adenosyl-L-methionine = a 5'-end (N(7)-methyl 5'-triphosphoguanosine)-(2'-O-methyladenylyl)-adenylyl-cytidylyl-adenosine in mRNA + S-adenosyl-L-homocysteine</text>
        <dbReference type="Rhea" id="RHEA:65440"/>
        <dbReference type="Rhea" id="RHEA-COMP:16798"/>
        <dbReference type="Rhea" id="RHEA-COMP:16801"/>
        <dbReference type="ChEBI" id="CHEBI:57856"/>
        <dbReference type="ChEBI" id="CHEBI:59789"/>
        <dbReference type="ChEBI" id="CHEBI:156482"/>
        <dbReference type="ChEBI" id="CHEBI:156483"/>
    </reaction>
</comment>
<comment type="catalytic activity">
    <reaction evidence="3">
        <text>GTP + H2O = GDP + phosphate + H(+)</text>
        <dbReference type="Rhea" id="RHEA:19669"/>
        <dbReference type="ChEBI" id="CHEBI:15377"/>
        <dbReference type="ChEBI" id="CHEBI:15378"/>
        <dbReference type="ChEBI" id="CHEBI:37565"/>
        <dbReference type="ChEBI" id="CHEBI:43474"/>
        <dbReference type="ChEBI" id="CHEBI:58189"/>
    </reaction>
</comment>
<comment type="subunit">
    <text evidence="1 8">Interacts with the P protein (By similarity). Interacts with host RUVBL1 and RUVBL2 (R2TP complex); this interaction regulates the viral transcription (PubMed:31121004).</text>
</comment>
<comment type="subcellular location">
    <subcellularLocation>
        <location evidence="1">Virion</location>
    </subcellularLocation>
</comment>
<comment type="similarity">
    <text evidence="9">Belongs to the paramyxovirus L protein family.</text>
</comment>
<sequence length="2261" mass="256575">MAGLNEILLPEVHLNSPIVRYKLFYYILHGQLPNDLEPDDLGPLANQNWKAIRAEESQVHARLKQIRVELIARIPSLRWTRSQREIAILIWPRILPILQAYDLRQSMQLPTVWEKLTQSTVNLISDGLERVVLHISNQLTGKPNLFTRSRAGQDVKDYSIPSTRELSQIWFNNEWSGSVKTWLMIKYRMRQLITNQKTGELTDLVTIVDTRSTLCIIAPELVALYSNEHKALTYLTFEMVLMVTDMLEGRLNVSSLCTASHYLSPLKKRIEILLTLVDDLALLMGDKVYGVVSSLESFVYAQLQYGDPVVDIKGTFYGFICNEILDLLTEDNIFTEEEANKVLLDLTSQFDNLSPDLTAELLCIMRLWGHPTLTASQAASKVRESMCAPKVLDFQTIMKTLAFFHAILINGYRRSHNGIWPPTTLHGNAPKSLIEMRHDNSELKYEYVLKNWKSISMLRIHKCFDASPDEDLSIFMKDKAISCPKQDWMGVFRRSLIKQRYRDANRPLPQPFNRRLLLNFLEDDRFDPIKELEYVTSGEYLRDPEFCASYSLKEKEIKATGRIFAKMTKRMRSCQVIAESLLANHAGKLMRENGVVLDQLKLTKSLLTMNQIGIISEHSRRSTADNMTLAHSGSNKHRINNSQFKKNKDSKHEMPDDGFEIAACFLTTDLTKYCLNWRYQVIIPFARTLNSMYGIPHLFEWIHLRLMRSTLYVGDPFNPPSDPTQLDLDTALNDDIFIVSPRGGIEGLCQKLWTMISISTIILSATEANTRVMSMVQGDNQAIAITTRVVRSLSHSEKKEQAYKASKLFFERLRANNHGIGHHLKEQETILSSDFFIYSKRVFYKGRILTQALKNVSKMCLTADILGDCSQASCSNLATTVMRLTENGVEKDLCYFLNAFMTIRQLCYDLVFPQTKSLSQDITNAYLNHPILISRLCLLPSQLGGLNFLSCSRLFNRNIGDPLVSAIADVKRLIKAGCLDIWVLYNILGRRPGKGKWSTLAADPYTLNIDYLVPSKTFLKKHAQYTLMERSVNPMLRGVFSENAAEEEEELAQYLLDREVVMPRVAHVILAQSSCGRRKQIQGYLDSTRTIIRYSLEVRPLSAKKLNTVIEYNLLYLSYNLEIIEKPNIVQPFLNAINVDTCSIDIARSLRKLSWATLLNGRPIEGLETPDPIELVHGCLIIGSDECEHCSSGDDKFTWFFLPKGIRLDNDPASNPPIRVPYIGSKTDERRVASMAYIKGASVSLKSALRLAGVYIWAFGDTEESWQDAYELASTRVNLTLEQLQSLTPLPTSANLVHRLDDGTTQLKFTPASSYAFSSFVHISNDCQVLEIDDQVTDSNLIYQQVMITGLALIETWNNPPINFSVYETTLHLHTGSSCCIRPVESCVVNPPLLPVPFINVPQMNKFVYDPEPLSLLEMEKIEDIAYQTRIGGLDQIPLLEKIPLLAHLTAKQMVNSITGLDEATSIVNDAVVQADYTSNWISECCYTYIDSVFVYSGWALLLELSYQMYYLRIQGIQGILDYVYMTLRRIPGMAITGISSTISHPRILRRCINLDVIAPINSPHIASLDYTKLSIDAVMWGTKQVLTNISQGIDYEIVVPSESQLTLSDRVLNLVARKLSLLAIIWANYNYPPKVKGMSPEDKCQALTTHLLQTVEYVEHIQIEKTNIRRMIIEPKLTAYPSNLFYLSRKLLNAIRDSEEGQFLIASYYNSFGYLEPILMESKIFNLSSSESASLTEFDFILNLELSEASLEKYSLPSLLMTAENMDNPFPQPPLHHVLRPLGLSSTSWYKTISVLNYISHMKISDGAHLYLAEGSGASMSLIETFLPGEIIWYNSLFNSGENPPQRNFAPLPTQFIESVPYRLIQAGIAAGSGVVQSFYPLWNGNSDITDLSTKTSVEYIIHKVGADTCALVHVDLEGVPGSMNSMLERAQVHALLITVTVLKPGGLLILKASWEPFNRFSFLLTILWQFSSTIRILRSSYSDPNNHEVYIIATLAVDPTTSSFTTALNRARTLNEQGFSLIPPELVSEYWRRRVEQGQIIQDCIDKVISECVRDQYLADNNIILQAGGTPSTRKWLDLPDYLSFNELQSEMARLITIHLKEVIEILKGQSSDHDTLLFTSYNVGPLGKINTILRLIVERILMYTVRNWCILPTQTRLTLRQSIELGEFRLRDVITPMEILKLSPNRKYLKSALNQSTFNHLMGETSDILLNRSYQKRIWKAIGCVIYCFGLLTPDVEDSERIDIDNDIPDYDIHGDII</sequence>
<feature type="chain" id="PRO_0000142730" description="RNA-directed RNA polymerase L">
    <location>
        <begin position="1"/>
        <end position="2261"/>
    </location>
</feature>
<feature type="domain" description="RdRp catalytic" evidence="5">
    <location>
        <begin position="662"/>
        <end position="846"/>
    </location>
</feature>
<feature type="domain" description="Mononegavirus-type SAM-dependent 2'-O-MTase" evidence="6">
    <location>
        <begin position="1781"/>
        <end position="1994"/>
    </location>
</feature>
<feature type="region of interest" description="Disordered" evidence="7">
    <location>
        <begin position="630"/>
        <end position="651"/>
    </location>
</feature>
<feature type="region of interest" description="PRNTase" evidence="1">
    <location>
        <begin position="919"/>
        <end position="1405"/>
    </location>
</feature>
<feature type="binding site" evidence="4">
    <location>
        <begin position="1811"/>
        <end position="1820"/>
    </location>
    <ligand>
        <name>ATP</name>
        <dbReference type="ChEBI" id="CHEBI:30616"/>
    </ligand>
</feature>
<protein>
    <recommendedName>
        <fullName>RNA-directed RNA polymerase L</fullName>
        <shortName>Protein L</shortName>
    </recommendedName>
    <alternativeName>
        <fullName>Large structural protein</fullName>
    </alternativeName>
    <alternativeName>
        <fullName>Replicase</fullName>
    </alternativeName>
    <alternativeName>
        <fullName>Transcriptase</fullName>
    </alternativeName>
    <domain>
        <recommendedName>
            <fullName>RNA-directed RNA polymerase</fullName>
            <ecNumber evidence="3">2.7.7.48</ecNumber>
        </recommendedName>
    </domain>
    <domain>
        <recommendedName>
            <fullName evidence="2">GTP phosphohydrolase</fullName>
            <ecNumber evidence="2">3.6.1.-</ecNumber>
        </recommendedName>
    </domain>
    <domain>
        <recommendedName>
            <fullName evidence="9">GDP polyribonucleotidyltransferase</fullName>
            <ecNumber evidence="2">2.7.7.88</ecNumber>
        </recommendedName>
        <alternativeName>
            <fullName evidence="9">PRNTase</fullName>
        </alternativeName>
    </domain>
    <domain>
        <recommendedName>
            <fullName evidence="9">mRNA cap methyltransferase</fullName>
            <ecNumber evidence="2">2.1.1.375</ecNumber>
        </recommendedName>
        <alternativeName>
            <fullName evidence="2">mRNA (guanine-N(7)-)-methyltransferase</fullName>
            <shortName evidence="2">G-N7-MTase</shortName>
        </alternativeName>
        <alternativeName>
            <fullName evidence="2">mRNA (nucleoside-2'-O-)-methyltransferase</fullName>
            <shortName evidence="2">N1-2'-O-MTase</shortName>
        </alternativeName>
    </domain>
</protein>
<name>L_MUMPM</name>
<evidence type="ECO:0000250" key="1">
    <source>
        <dbReference type="UniProtKB" id="C0JJA4"/>
    </source>
</evidence>
<evidence type="ECO:0000250" key="2">
    <source>
        <dbReference type="UniProtKB" id="P03523"/>
    </source>
</evidence>
<evidence type="ECO:0000250" key="3">
    <source>
        <dbReference type="UniProtKB" id="P28887"/>
    </source>
</evidence>
<evidence type="ECO:0000255" key="4"/>
<evidence type="ECO:0000255" key="5">
    <source>
        <dbReference type="PROSITE-ProRule" id="PRU00539"/>
    </source>
</evidence>
<evidence type="ECO:0000255" key="6">
    <source>
        <dbReference type="PROSITE-ProRule" id="PRU00923"/>
    </source>
</evidence>
<evidence type="ECO:0000256" key="7">
    <source>
        <dbReference type="SAM" id="MobiDB-lite"/>
    </source>
</evidence>
<evidence type="ECO:0000269" key="8">
    <source>
    </source>
</evidence>
<evidence type="ECO:0000305" key="9"/>
<dbReference type="EC" id="2.7.7.48" evidence="3"/>
<dbReference type="EC" id="3.6.1.-" evidence="2"/>
<dbReference type="EC" id="2.7.7.88" evidence="2"/>
<dbReference type="EC" id="2.1.1.375" evidence="2"/>
<dbReference type="EMBL" id="D10575">
    <property type="protein sequence ID" value="BAA01432.1"/>
    <property type="molecule type" value="Genomic_RNA"/>
</dbReference>
<dbReference type="EMBL" id="AB040874">
    <property type="protein sequence ID" value="BAA94391.1"/>
    <property type="molecule type" value="Genomic_RNA"/>
</dbReference>
<dbReference type="PIR" id="A42548">
    <property type="entry name" value="A42548"/>
</dbReference>
<dbReference type="SMR" id="P30929"/>
<dbReference type="KEGG" id="vg:1489763"/>
<dbReference type="Proteomes" id="UP000002331">
    <property type="component" value="Segment"/>
</dbReference>
<dbReference type="GO" id="GO:0030430">
    <property type="term" value="C:host cell cytoplasm"/>
    <property type="evidence" value="ECO:0007669"/>
    <property type="project" value="UniProtKB-KW"/>
</dbReference>
<dbReference type="GO" id="GO:0044423">
    <property type="term" value="C:virion component"/>
    <property type="evidence" value="ECO:0007669"/>
    <property type="project" value="UniProtKB-KW"/>
</dbReference>
<dbReference type="GO" id="GO:0005524">
    <property type="term" value="F:ATP binding"/>
    <property type="evidence" value="ECO:0007669"/>
    <property type="project" value="UniProtKB-KW"/>
</dbReference>
<dbReference type="GO" id="GO:0003924">
    <property type="term" value="F:GTPase activity"/>
    <property type="evidence" value="ECO:0007669"/>
    <property type="project" value="RHEA"/>
</dbReference>
<dbReference type="GO" id="GO:0004482">
    <property type="term" value="F:mRNA 5'-cap (guanine-N7-)-methyltransferase activity"/>
    <property type="evidence" value="ECO:0007669"/>
    <property type="project" value="InterPro"/>
</dbReference>
<dbReference type="GO" id="GO:0003968">
    <property type="term" value="F:RNA-directed RNA polymerase activity"/>
    <property type="evidence" value="ECO:0007669"/>
    <property type="project" value="UniProtKB-KW"/>
</dbReference>
<dbReference type="Gene3D" id="3.40.50.12760">
    <property type="match status" value="1"/>
</dbReference>
<dbReference type="InterPro" id="IPR039736">
    <property type="entry name" value="L_poly_C"/>
</dbReference>
<dbReference type="InterPro" id="IPR026890">
    <property type="entry name" value="Mononeg_mRNAcap"/>
</dbReference>
<dbReference type="InterPro" id="IPR014023">
    <property type="entry name" value="Mononeg_RNA_pol_cat"/>
</dbReference>
<dbReference type="InterPro" id="IPR025786">
    <property type="entry name" value="Mononega_L_MeTrfase"/>
</dbReference>
<dbReference type="InterPro" id="IPR016269">
    <property type="entry name" value="RNA-dir_pol_paramyxovirus"/>
</dbReference>
<dbReference type="NCBIfam" id="TIGR04198">
    <property type="entry name" value="paramyx_RNAcap"/>
    <property type="match status" value="1"/>
</dbReference>
<dbReference type="Pfam" id="PF14318">
    <property type="entry name" value="Mononeg_mRNAcap"/>
    <property type="match status" value="1"/>
</dbReference>
<dbReference type="Pfam" id="PF00946">
    <property type="entry name" value="Mononeg_RNA_pol"/>
    <property type="match status" value="1"/>
</dbReference>
<dbReference type="PIRSF" id="PIRSF000830">
    <property type="entry name" value="RNA_pol_ParamyxoV"/>
    <property type="match status" value="1"/>
</dbReference>
<dbReference type="PROSITE" id="PS50526">
    <property type="entry name" value="RDRP_SSRNA_NEG_NONSEG"/>
    <property type="match status" value="1"/>
</dbReference>
<dbReference type="PROSITE" id="PS51590">
    <property type="entry name" value="SAM_MT_MNV_L"/>
    <property type="match status" value="1"/>
</dbReference>
<keyword id="KW-0067">ATP-binding</keyword>
<keyword id="KW-0378">Hydrolase</keyword>
<keyword id="KW-0489">Methyltransferase</keyword>
<keyword id="KW-0506">mRNA capping</keyword>
<keyword id="KW-0507">mRNA processing</keyword>
<keyword id="KW-0511">Multifunctional enzyme</keyword>
<keyword id="KW-0547">Nucleotide-binding</keyword>
<keyword id="KW-0548">Nucleotidyltransferase</keyword>
<keyword id="KW-1185">Reference proteome</keyword>
<keyword id="KW-0696">RNA-directed RNA polymerase</keyword>
<keyword id="KW-0949">S-adenosyl-L-methionine</keyword>
<keyword id="KW-0808">Transferase</keyword>
<keyword id="KW-0693">Viral RNA replication</keyword>
<keyword id="KW-0946">Virion</keyword>
<organism>
    <name type="scientific">Mumps virus genotype B (strain Miyahara vaccine)</name>
    <name type="common">MuV</name>
    <dbReference type="NCBI Taxonomy" id="11171"/>
    <lineage>
        <taxon>Viruses</taxon>
        <taxon>Riboviria</taxon>
        <taxon>Orthornavirae</taxon>
        <taxon>Negarnaviricota</taxon>
        <taxon>Haploviricotina</taxon>
        <taxon>Monjiviricetes</taxon>
        <taxon>Mononegavirales</taxon>
        <taxon>Paramyxoviridae</taxon>
        <taxon>Rubulavirinae</taxon>
        <taxon>Orthorubulavirus</taxon>
        <taxon>Orthorubulavirus parotitidis</taxon>
        <taxon>Mumps orthorubulavirus</taxon>
    </lineage>
</organism>